<proteinExistence type="evidence at protein level"/>
<protein>
    <recommendedName>
        <fullName>Urocanate hydratase</fullName>
        <shortName>Urocanase</shortName>
        <ecNumber>4.2.1.49</ecNumber>
    </recommendedName>
    <alternativeName>
        <fullName>Imidazolonepropionate hydrolase</fullName>
    </alternativeName>
</protein>
<reference key="1">
    <citation type="journal article" date="2009" name="PLoS Biol.">
        <title>Lineage-specific biology revealed by a finished genome assembly of the mouse.</title>
        <authorList>
            <person name="Church D.M."/>
            <person name="Goodstadt L."/>
            <person name="Hillier L.W."/>
            <person name="Zody M.C."/>
            <person name="Goldstein S."/>
            <person name="She X."/>
            <person name="Bult C.J."/>
            <person name="Agarwala R."/>
            <person name="Cherry J.L."/>
            <person name="DiCuccio M."/>
            <person name="Hlavina W."/>
            <person name="Kapustin Y."/>
            <person name="Meric P."/>
            <person name="Maglott D."/>
            <person name="Birtle Z."/>
            <person name="Marques A.C."/>
            <person name="Graves T."/>
            <person name="Zhou S."/>
            <person name="Teague B."/>
            <person name="Potamousis K."/>
            <person name="Churas C."/>
            <person name="Place M."/>
            <person name="Herschleb J."/>
            <person name="Runnheim R."/>
            <person name="Forrest D."/>
            <person name="Amos-Landgraf J."/>
            <person name="Schwartz D.C."/>
            <person name="Cheng Z."/>
            <person name="Lindblad-Toh K."/>
            <person name="Eichler E.E."/>
            <person name="Ponting C.P."/>
        </authorList>
    </citation>
    <scope>NUCLEOTIDE SEQUENCE [LARGE SCALE GENOMIC DNA]</scope>
    <source>
        <strain>C57BL/6J</strain>
    </source>
</reference>
<reference key="2">
    <citation type="journal article" date="2004" name="Genome Res.">
        <title>The status, quality, and expansion of the NIH full-length cDNA project: the Mammalian Gene Collection (MGC).</title>
        <authorList>
            <consortium name="The MGC Project Team"/>
        </authorList>
    </citation>
    <scope>NUCLEOTIDE SEQUENCE [LARGE SCALE MRNA]</scope>
    <source>
        <tissue>Liver</tissue>
    </source>
</reference>
<reference key="3">
    <citation type="journal article" date="2010" name="Cell">
        <title>A tissue-specific atlas of mouse protein phosphorylation and expression.</title>
        <authorList>
            <person name="Huttlin E.L."/>
            <person name="Jedrychowski M.P."/>
            <person name="Elias J.E."/>
            <person name="Goswami T."/>
            <person name="Rad R."/>
            <person name="Beausoleil S.A."/>
            <person name="Villen J."/>
            <person name="Haas W."/>
            <person name="Sowa M.E."/>
            <person name="Gygi S.P."/>
        </authorList>
    </citation>
    <scope>IDENTIFICATION BY MASS SPECTROMETRY [LARGE SCALE ANALYSIS]</scope>
    <source>
        <tissue>Kidney</tissue>
        <tissue>Liver</tissue>
    </source>
</reference>
<reference key="4">
    <citation type="journal article" date="2013" name="Mol. Cell">
        <title>SIRT5-mediated lysine desuccinylation impacts diverse metabolic pathways.</title>
        <authorList>
            <person name="Park J."/>
            <person name="Chen Y."/>
            <person name="Tishkoff D.X."/>
            <person name="Peng C."/>
            <person name="Tan M."/>
            <person name="Dai L."/>
            <person name="Xie Z."/>
            <person name="Zhang Y."/>
            <person name="Zwaans B.M."/>
            <person name="Skinner M.E."/>
            <person name="Lombard D.B."/>
            <person name="Zhao Y."/>
        </authorList>
    </citation>
    <scope>SUCCINYLATION [LARGE SCALE ANALYSIS] AT LYS-534</scope>
    <scope>IDENTIFICATION BY MASS SPECTROMETRY [LARGE SCALE ANALYSIS]</scope>
    <source>
        <tissue>Liver</tissue>
    </source>
</reference>
<gene>
    <name type="primary">Uroc1</name>
</gene>
<accession>Q8VC12</accession>
<accession>E9QNN2</accession>
<organism>
    <name type="scientific">Mus musculus</name>
    <name type="common">Mouse</name>
    <dbReference type="NCBI Taxonomy" id="10090"/>
    <lineage>
        <taxon>Eukaryota</taxon>
        <taxon>Metazoa</taxon>
        <taxon>Chordata</taxon>
        <taxon>Craniata</taxon>
        <taxon>Vertebrata</taxon>
        <taxon>Euteleostomi</taxon>
        <taxon>Mammalia</taxon>
        <taxon>Eutheria</taxon>
        <taxon>Euarchontoglires</taxon>
        <taxon>Glires</taxon>
        <taxon>Rodentia</taxon>
        <taxon>Myomorpha</taxon>
        <taxon>Muroidea</taxon>
        <taxon>Muridae</taxon>
        <taxon>Murinae</taxon>
        <taxon>Mus</taxon>
        <taxon>Mus</taxon>
    </lineage>
</organism>
<feature type="chain" id="PRO_0000207375" description="Urocanate hydratase">
    <location>
        <begin position="1"/>
        <end position="676"/>
    </location>
</feature>
<feature type="binding site" evidence="2">
    <location>
        <begin position="126"/>
        <end position="127"/>
    </location>
    <ligand>
        <name>NAD(+)</name>
        <dbReference type="ChEBI" id="CHEBI:57540"/>
    </ligand>
</feature>
<feature type="binding site" evidence="2">
    <location>
        <position position="204"/>
    </location>
    <ligand>
        <name>NAD(+)</name>
        <dbReference type="ChEBI" id="CHEBI:57540"/>
    </ligand>
</feature>
<feature type="binding site" evidence="2">
    <location>
        <begin position="251"/>
        <end position="253"/>
    </location>
    <ligand>
        <name>NAD(+)</name>
        <dbReference type="ChEBI" id="CHEBI:57540"/>
    </ligand>
</feature>
<feature type="binding site" evidence="2">
    <location>
        <position position="271"/>
    </location>
    <ligand>
        <name>NAD(+)</name>
        <dbReference type="ChEBI" id="CHEBI:57540"/>
    </ligand>
</feature>
<feature type="binding site" evidence="2">
    <location>
        <begin position="317"/>
        <end position="318"/>
    </location>
    <ligand>
        <name>NAD(+)</name>
        <dbReference type="ChEBI" id="CHEBI:57540"/>
    </ligand>
</feature>
<feature type="binding site" evidence="2">
    <location>
        <begin position="343"/>
        <end position="347"/>
    </location>
    <ligand>
        <name>NAD(+)</name>
        <dbReference type="ChEBI" id="CHEBI:57540"/>
    </ligand>
</feature>
<feature type="binding site" evidence="2">
    <location>
        <begin position="354"/>
        <end position="355"/>
    </location>
    <ligand>
        <name>NAD(+)</name>
        <dbReference type="ChEBI" id="CHEBI:57540"/>
    </ligand>
</feature>
<feature type="binding site" evidence="2">
    <location>
        <position position="403"/>
    </location>
    <ligand>
        <name>NAD(+)</name>
        <dbReference type="ChEBI" id="CHEBI:57540"/>
    </ligand>
</feature>
<feature type="binding site" evidence="2">
    <location>
        <position position="594"/>
    </location>
    <ligand>
        <name>NAD(+)</name>
        <dbReference type="ChEBI" id="CHEBI:57540"/>
    </ligand>
</feature>
<feature type="modified residue" description="N6-succinyllysine" evidence="4">
    <location>
        <position position="534"/>
    </location>
</feature>
<feature type="sequence conflict" description="In Ref. 2; AAH22133." evidence="3" ref="2">
    <original>R</original>
    <variation>H</variation>
    <location>
        <position position="295"/>
    </location>
</feature>
<feature type="sequence conflict" description="In Ref. 2; AAH22133." evidence="3" ref="2">
    <original>H</original>
    <variation>R</variation>
    <location>
        <position position="327"/>
    </location>
</feature>
<name>HUTU_MOUSE</name>
<dbReference type="EC" id="4.2.1.49"/>
<dbReference type="EMBL" id="AC122521">
    <property type="status" value="NOT_ANNOTATED_CDS"/>
    <property type="molecule type" value="Genomic_DNA"/>
</dbReference>
<dbReference type="EMBL" id="AC163346">
    <property type="status" value="NOT_ANNOTATED_CDS"/>
    <property type="molecule type" value="Genomic_DNA"/>
</dbReference>
<dbReference type="EMBL" id="BC022133">
    <property type="protein sequence ID" value="AAH22133.1"/>
    <property type="molecule type" value="mRNA"/>
</dbReference>
<dbReference type="CCDS" id="CCDS39561.1"/>
<dbReference type="RefSeq" id="NP_659189.2">
    <property type="nucleotide sequence ID" value="NM_144940.2"/>
</dbReference>
<dbReference type="SMR" id="Q8VC12"/>
<dbReference type="FunCoup" id="Q8VC12">
    <property type="interactions" value="168"/>
</dbReference>
<dbReference type="STRING" id="10090.ENSMUSP00000127114"/>
<dbReference type="GlyGen" id="Q8VC12">
    <property type="glycosylation" value="1 site, 1 O-linked glycan (1 site)"/>
</dbReference>
<dbReference type="iPTMnet" id="Q8VC12"/>
<dbReference type="PhosphoSitePlus" id="Q8VC12"/>
<dbReference type="SwissPalm" id="Q8VC12"/>
<dbReference type="jPOST" id="Q8VC12"/>
<dbReference type="PaxDb" id="10090-ENSMUSP00000127114"/>
<dbReference type="ProteomicsDB" id="267072"/>
<dbReference type="Antibodypedia" id="52455">
    <property type="antibodies" value="71 antibodies from 16 providers"/>
</dbReference>
<dbReference type="DNASU" id="243537"/>
<dbReference type="Ensembl" id="ENSMUST00000046128.12">
    <property type="protein sequence ID" value="ENSMUSP00000040424.10"/>
    <property type="gene ID" value="ENSMUSG00000034456.16"/>
</dbReference>
<dbReference type="GeneID" id="243537"/>
<dbReference type="KEGG" id="mmu:243537"/>
<dbReference type="UCSC" id="uc009cxc.2">
    <property type="organism name" value="mouse"/>
</dbReference>
<dbReference type="AGR" id="MGI:2385332"/>
<dbReference type="CTD" id="131669"/>
<dbReference type="MGI" id="MGI:2385332">
    <property type="gene designation" value="Uroc1"/>
</dbReference>
<dbReference type="VEuPathDB" id="HostDB:ENSMUSG00000034456"/>
<dbReference type="eggNOG" id="ENOG502QR75">
    <property type="taxonomic scope" value="Eukaryota"/>
</dbReference>
<dbReference type="GeneTree" id="ENSGT00390000015136"/>
<dbReference type="HOGENOM" id="CLU_018868_3_0_1"/>
<dbReference type="InParanoid" id="Q8VC12"/>
<dbReference type="OrthoDB" id="194468at2759"/>
<dbReference type="Reactome" id="R-MMU-70921">
    <property type="pathway name" value="Histidine catabolism"/>
</dbReference>
<dbReference type="UniPathway" id="UPA00379">
    <property type="reaction ID" value="UER00550"/>
</dbReference>
<dbReference type="BioGRID-ORCS" id="243537">
    <property type="hits" value="1 hit in 76 CRISPR screens"/>
</dbReference>
<dbReference type="PRO" id="PR:Q8VC12"/>
<dbReference type="Proteomes" id="UP000000589">
    <property type="component" value="Chromosome 6"/>
</dbReference>
<dbReference type="RNAct" id="Q8VC12">
    <property type="molecule type" value="protein"/>
</dbReference>
<dbReference type="Bgee" id="ENSMUSG00000034456">
    <property type="expression patterns" value="Expressed in left lobe of liver and 34 other cell types or tissues"/>
</dbReference>
<dbReference type="ExpressionAtlas" id="Q8VC12">
    <property type="expression patterns" value="baseline and differential"/>
</dbReference>
<dbReference type="GO" id="GO:0005829">
    <property type="term" value="C:cytosol"/>
    <property type="evidence" value="ECO:0007669"/>
    <property type="project" value="Ensembl"/>
</dbReference>
<dbReference type="GO" id="GO:0016153">
    <property type="term" value="F:urocanate hydratase activity"/>
    <property type="evidence" value="ECO:0007669"/>
    <property type="project" value="UniProtKB-EC"/>
</dbReference>
<dbReference type="GO" id="GO:0019556">
    <property type="term" value="P:L-histidine catabolic process to glutamate and formamide"/>
    <property type="evidence" value="ECO:0007669"/>
    <property type="project" value="UniProtKB-UniPathway"/>
</dbReference>
<dbReference type="GO" id="GO:0019557">
    <property type="term" value="P:L-histidine catabolic process to glutamate and formate"/>
    <property type="evidence" value="ECO:0007669"/>
    <property type="project" value="UniProtKB-UniPathway"/>
</dbReference>
<dbReference type="FunFam" id="3.40.1770.10:FF:000002">
    <property type="entry name" value="Urocanate hydratase 1"/>
    <property type="match status" value="1"/>
</dbReference>
<dbReference type="FunFam" id="3.40.1770.10:FF:000003">
    <property type="entry name" value="Urocanate hydratase 1"/>
    <property type="match status" value="1"/>
</dbReference>
<dbReference type="FunFam" id="3.40.50.10730:FF:000002">
    <property type="entry name" value="Urocanate hydratase 1"/>
    <property type="match status" value="1"/>
</dbReference>
<dbReference type="Gene3D" id="3.40.50.10730">
    <property type="entry name" value="Urocanase like domains"/>
    <property type="match status" value="1"/>
</dbReference>
<dbReference type="Gene3D" id="3.40.1770.10">
    <property type="entry name" value="Urocanase superfamily"/>
    <property type="match status" value="2"/>
</dbReference>
<dbReference type="HAMAP" id="MF_00577">
    <property type="entry name" value="HutU"/>
    <property type="match status" value="1"/>
</dbReference>
<dbReference type="InterPro" id="IPR055351">
    <property type="entry name" value="Urocanase"/>
</dbReference>
<dbReference type="InterPro" id="IPR023637">
    <property type="entry name" value="Urocanase-like"/>
</dbReference>
<dbReference type="InterPro" id="IPR035401">
    <property type="entry name" value="Urocanase_C"/>
</dbReference>
<dbReference type="InterPro" id="IPR038364">
    <property type="entry name" value="Urocanase_central_sf"/>
</dbReference>
<dbReference type="InterPro" id="IPR023636">
    <property type="entry name" value="Urocanase_CS"/>
</dbReference>
<dbReference type="InterPro" id="IPR035400">
    <property type="entry name" value="Urocanase_N"/>
</dbReference>
<dbReference type="InterPro" id="IPR035085">
    <property type="entry name" value="Urocanase_Rossmann-like"/>
</dbReference>
<dbReference type="InterPro" id="IPR036190">
    <property type="entry name" value="Urocanase_sf"/>
</dbReference>
<dbReference type="NCBIfam" id="TIGR01228">
    <property type="entry name" value="hutU"/>
    <property type="match status" value="1"/>
</dbReference>
<dbReference type="NCBIfam" id="NF003820">
    <property type="entry name" value="PRK05414.1"/>
    <property type="match status" value="1"/>
</dbReference>
<dbReference type="PANTHER" id="PTHR12216">
    <property type="entry name" value="UROCANATE HYDRATASE"/>
    <property type="match status" value="1"/>
</dbReference>
<dbReference type="PANTHER" id="PTHR12216:SF3">
    <property type="entry name" value="UROCANATE HYDRATASE"/>
    <property type="match status" value="1"/>
</dbReference>
<dbReference type="Pfam" id="PF01175">
    <property type="entry name" value="Urocanase"/>
    <property type="match status" value="1"/>
</dbReference>
<dbReference type="Pfam" id="PF17392">
    <property type="entry name" value="Urocanase_C"/>
    <property type="match status" value="1"/>
</dbReference>
<dbReference type="Pfam" id="PF17391">
    <property type="entry name" value="Urocanase_N"/>
    <property type="match status" value="1"/>
</dbReference>
<dbReference type="PIRSF" id="PIRSF001423">
    <property type="entry name" value="Urocanate_hydrat"/>
    <property type="match status" value="1"/>
</dbReference>
<dbReference type="SUPFAM" id="SSF111326">
    <property type="entry name" value="Urocanase"/>
    <property type="match status" value="1"/>
</dbReference>
<dbReference type="PROSITE" id="PS01233">
    <property type="entry name" value="UROCANASE"/>
    <property type="match status" value="1"/>
</dbReference>
<sequence length="676" mass="74590">MSSLQELCSGLPLRPLPENRGRWAGVPHAPVRTPNLSPEEEQLALRNALRYFPPDVQKLLALEFAQELRQFGHIYMYRFCPSIEMRAYPIDQYPCRTRAAAAIMHMIMNNLDPAVAQFPQELVTYGGNGQVFSNWAQFRLTMSYLSKMTEEQTLVMYSGHPLGLFPSSPRAPRLVITNGMVIPNYSSRTEYEKLFALGVTMYGQMTAGSYCYIGPQGIVHGTVLTVLNAGRRYLGIENLAGKVFVTSGLGGMSGAQAKAAAIVGCIGVIAEVDKAALVKRHRQGWLMEVTDSLDRCIARLREARKKKEVLSLGYHGNVVDLWERLVHELDTTGELLVDLGSDQTSCHNPFNGGYYPVQLSFSEAQSLMSSNPAAFKHLVQESLRRHVAAINRLAQEKFFFWDYGNAFLLEAQRAGADVEKKGANKMEFRYPSYVQHIMGDIFSQGFGPFRWVCTSGDPQDLAVTDHLATSVLEKAIADGVKASVKLQYMDNIRWIREAAKHQLVVGSQARILYSDQKGRVAIAVAINQAIASGKIKAPVVLSRDHHDVSGTDSPFRETSNIYDGSAFCADMAVQNFVGDACRGATWVALHNGGGVGWGEVINGGFGLVLDGTAEAEQKARMMLSWDVSNGVARRCWSGNPKAYEIICQTMQENSGLVVTLPHEVADEQVLQQALRP</sequence>
<comment type="catalytic activity">
    <reaction>
        <text>4-imidazolone-5-propanoate = trans-urocanate + H2O</text>
        <dbReference type="Rhea" id="RHEA:13101"/>
        <dbReference type="ChEBI" id="CHEBI:15377"/>
        <dbReference type="ChEBI" id="CHEBI:17771"/>
        <dbReference type="ChEBI" id="CHEBI:77893"/>
        <dbReference type="EC" id="4.2.1.49"/>
    </reaction>
</comment>
<comment type="cofactor">
    <cofactor evidence="1">
        <name>NAD(+)</name>
        <dbReference type="ChEBI" id="CHEBI:57540"/>
    </cofactor>
</comment>
<comment type="pathway">
    <text>Amino-acid degradation; L-histidine degradation into L-glutamate; N-formimidoyl-L-glutamate from L-histidine: step 2/3.</text>
</comment>
<comment type="similarity">
    <text evidence="3">Belongs to the urocanase family.</text>
</comment>
<evidence type="ECO:0000250" key="1"/>
<evidence type="ECO:0000250" key="2">
    <source>
        <dbReference type="UniProtKB" id="P25503"/>
    </source>
</evidence>
<evidence type="ECO:0000305" key="3"/>
<evidence type="ECO:0007744" key="4">
    <source>
    </source>
</evidence>
<keyword id="KW-0369">Histidine metabolism</keyword>
<keyword id="KW-0456">Lyase</keyword>
<keyword id="KW-0520">NAD</keyword>
<keyword id="KW-1185">Reference proteome</keyword>